<gene>
    <name evidence="1" type="primary">sfsA</name>
    <name type="ordered locus">BWG_0139</name>
</gene>
<proteinExistence type="inferred from homology"/>
<reference key="1">
    <citation type="journal article" date="2009" name="J. Bacteriol.">
        <title>Genomic sequencing reveals regulatory mutations and recombinational events in the widely used MC4100 lineage of Escherichia coli K-12.</title>
        <authorList>
            <person name="Ferenci T."/>
            <person name="Zhou Z."/>
            <person name="Betteridge T."/>
            <person name="Ren Y."/>
            <person name="Liu Y."/>
            <person name="Feng L."/>
            <person name="Reeves P.R."/>
            <person name="Wang L."/>
        </authorList>
    </citation>
    <scope>NUCLEOTIDE SEQUENCE [LARGE SCALE GENOMIC DNA]</scope>
    <source>
        <strain>K12 / MC4100 / BW2952</strain>
    </source>
</reference>
<accession>C4ZRN9</accession>
<keyword id="KW-0238">DNA-binding</keyword>
<feature type="chain" id="PRO_1000202720" description="Sugar fermentation stimulation protein A">
    <location>
        <begin position="1"/>
        <end position="234"/>
    </location>
</feature>
<feature type="DNA-binding region" description="H-T-H motif" evidence="1">
    <location>
        <begin position="201"/>
        <end position="220"/>
    </location>
</feature>
<sequence>MEFSPPLQRATLIQRYKRFLADVITPDGRELTLHCPNTGAMTGCATPGDTVWYSTSDNTKRKYPHTWELTQSQSGAFICVNTLWANRLTKEAILNESISELSGYSSLKSEVKYGAERSRIDFMLQADSRPDCYIEVKSVTLAENEQGYFPDAVTERGQKHLRELMSVAAEGQRAVIFFAVLHSAITRFSPARHIDEKYAQLLSEAQQRGVEILAYKAEISAEGMALKKSLPVTL</sequence>
<protein>
    <recommendedName>
        <fullName evidence="1">Sugar fermentation stimulation protein A</fullName>
    </recommendedName>
</protein>
<organism>
    <name type="scientific">Escherichia coli (strain K12 / MC4100 / BW2952)</name>
    <dbReference type="NCBI Taxonomy" id="595496"/>
    <lineage>
        <taxon>Bacteria</taxon>
        <taxon>Pseudomonadati</taxon>
        <taxon>Pseudomonadota</taxon>
        <taxon>Gammaproteobacteria</taxon>
        <taxon>Enterobacterales</taxon>
        <taxon>Enterobacteriaceae</taxon>
        <taxon>Escherichia</taxon>
    </lineage>
</organism>
<dbReference type="EMBL" id="CP001396">
    <property type="protein sequence ID" value="ACR64252.1"/>
    <property type="molecule type" value="Genomic_DNA"/>
</dbReference>
<dbReference type="RefSeq" id="WP_000396036.1">
    <property type="nucleotide sequence ID" value="NC_012759.1"/>
</dbReference>
<dbReference type="SMR" id="C4ZRN9"/>
<dbReference type="GeneID" id="75202039"/>
<dbReference type="KEGG" id="ebw:BWG_0139"/>
<dbReference type="HOGENOM" id="CLU_052299_2_0_6"/>
<dbReference type="GO" id="GO:0003677">
    <property type="term" value="F:DNA binding"/>
    <property type="evidence" value="ECO:0007669"/>
    <property type="project" value="UniProtKB-KW"/>
</dbReference>
<dbReference type="CDD" id="cd22359">
    <property type="entry name" value="SfsA-like_bacterial"/>
    <property type="match status" value="1"/>
</dbReference>
<dbReference type="FunFam" id="2.40.50.580:FF:000001">
    <property type="entry name" value="Sugar fermentation stimulation protein A"/>
    <property type="match status" value="1"/>
</dbReference>
<dbReference type="FunFam" id="3.40.1350.60:FF:000001">
    <property type="entry name" value="Sugar fermentation stimulation protein A"/>
    <property type="match status" value="1"/>
</dbReference>
<dbReference type="Gene3D" id="2.40.50.580">
    <property type="match status" value="1"/>
</dbReference>
<dbReference type="Gene3D" id="3.40.1350.60">
    <property type="match status" value="1"/>
</dbReference>
<dbReference type="HAMAP" id="MF_00095">
    <property type="entry name" value="SfsA"/>
    <property type="match status" value="1"/>
</dbReference>
<dbReference type="InterPro" id="IPR005224">
    <property type="entry name" value="SfsA"/>
</dbReference>
<dbReference type="InterPro" id="IPR040452">
    <property type="entry name" value="SfsA_C"/>
</dbReference>
<dbReference type="InterPro" id="IPR041465">
    <property type="entry name" value="SfsA_N"/>
</dbReference>
<dbReference type="NCBIfam" id="TIGR00230">
    <property type="entry name" value="sfsA"/>
    <property type="match status" value="1"/>
</dbReference>
<dbReference type="PANTHER" id="PTHR30545">
    <property type="entry name" value="SUGAR FERMENTATION STIMULATION PROTEIN A"/>
    <property type="match status" value="1"/>
</dbReference>
<dbReference type="PANTHER" id="PTHR30545:SF2">
    <property type="entry name" value="SUGAR FERMENTATION STIMULATION PROTEIN A"/>
    <property type="match status" value="1"/>
</dbReference>
<dbReference type="Pfam" id="PF03749">
    <property type="entry name" value="SfsA"/>
    <property type="match status" value="1"/>
</dbReference>
<dbReference type="Pfam" id="PF17746">
    <property type="entry name" value="SfsA_N"/>
    <property type="match status" value="1"/>
</dbReference>
<comment type="function">
    <text evidence="1">Binds to DNA non-specifically. Could be a regulatory factor involved in maltose metabolism.</text>
</comment>
<comment type="similarity">
    <text evidence="1">Belongs to the SfsA family.</text>
</comment>
<name>SFSA_ECOBW</name>
<evidence type="ECO:0000255" key="1">
    <source>
        <dbReference type="HAMAP-Rule" id="MF_00095"/>
    </source>
</evidence>